<dbReference type="EMBL" id="CP000504">
    <property type="protein sequence ID" value="ABL88247.1"/>
    <property type="molecule type" value="Genomic_DNA"/>
</dbReference>
<dbReference type="RefSeq" id="WP_011762822.1">
    <property type="nucleotide sequence ID" value="NC_008701.1"/>
</dbReference>
<dbReference type="SMR" id="A1RTG5"/>
<dbReference type="STRING" id="384616.Pisl_1074"/>
<dbReference type="GeneID" id="4617959"/>
<dbReference type="KEGG" id="pis:Pisl_1074"/>
<dbReference type="eggNOG" id="arCOG04270">
    <property type="taxonomic scope" value="Archaea"/>
</dbReference>
<dbReference type="HOGENOM" id="CLU_100097_1_0_2"/>
<dbReference type="OrthoDB" id="5935at2157"/>
<dbReference type="Proteomes" id="UP000002595">
    <property type="component" value="Chromosome"/>
</dbReference>
<dbReference type="GO" id="GO:0003677">
    <property type="term" value="F:DNA binding"/>
    <property type="evidence" value="ECO:0007669"/>
    <property type="project" value="UniProtKB-KW"/>
</dbReference>
<dbReference type="GO" id="GO:0006355">
    <property type="term" value="P:regulation of DNA-templated transcription"/>
    <property type="evidence" value="ECO:0007669"/>
    <property type="project" value="InterPro"/>
</dbReference>
<dbReference type="GO" id="GO:0006367">
    <property type="term" value="P:transcription initiation at RNA polymerase II promoter"/>
    <property type="evidence" value="ECO:0007669"/>
    <property type="project" value="InterPro"/>
</dbReference>
<dbReference type="Gene3D" id="1.10.10.10">
    <property type="entry name" value="Winged helix-like DNA-binding domain superfamily/Winged helix DNA-binding domain"/>
    <property type="match status" value="1"/>
</dbReference>
<dbReference type="HAMAP" id="MF_01909">
    <property type="entry name" value="TFE_arch"/>
    <property type="match status" value="1"/>
</dbReference>
<dbReference type="InterPro" id="IPR016481">
    <property type="entry name" value="TF_E_archaea"/>
</dbReference>
<dbReference type="InterPro" id="IPR017919">
    <property type="entry name" value="TFIIE/TFIIEa_HTH"/>
</dbReference>
<dbReference type="InterPro" id="IPR002853">
    <property type="entry name" value="TFIIE_asu"/>
</dbReference>
<dbReference type="InterPro" id="IPR024550">
    <property type="entry name" value="TFIIEa/SarR/Rpc3_HTH_dom"/>
</dbReference>
<dbReference type="InterPro" id="IPR036388">
    <property type="entry name" value="WH-like_DNA-bd_sf"/>
</dbReference>
<dbReference type="InterPro" id="IPR036390">
    <property type="entry name" value="WH_DNA-bd_sf"/>
</dbReference>
<dbReference type="Pfam" id="PF02002">
    <property type="entry name" value="TFIIE_alpha"/>
    <property type="match status" value="1"/>
</dbReference>
<dbReference type="PIRSF" id="PIRSF006373">
    <property type="entry name" value="TF_E_archaea"/>
    <property type="match status" value="1"/>
</dbReference>
<dbReference type="SMART" id="SM00531">
    <property type="entry name" value="TFIIE"/>
    <property type="match status" value="1"/>
</dbReference>
<dbReference type="SUPFAM" id="SSF46785">
    <property type="entry name" value="Winged helix' DNA-binding domain"/>
    <property type="match status" value="1"/>
</dbReference>
<dbReference type="PROSITE" id="PS51344">
    <property type="entry name" value="HTH_TFE_IIE"/>
    <property type="match status" value="1"/>
</dbReference>
<reference key="1">
    <citation type="submission" date="2006-12" db="EMBL/GenBank/DDBJ databases">
        <title>Complete sequence of Pyrobaculum islandicum DSM 4184.</title>
        <authorList>
            <person name="Copeland A."/>
            <person name="Lucas S."/>
            <person name="Lapidus A."/>
            <person name="Barry K."/>
            <person name="Detter J.C."/>
            <person name="Glavina del Rio T."/>
            <person name="Dalin E."/>
            <person name="Tice H."/>
            <person name="Pitluck S."/>
            <person name="Meincke L."/>
            <person name="Brettin T."/>
            <person name="Bruce D."/>
            <person name="Han C."/>
            <person name="Tapia R."/>
            <person name="Gilna P."/>
            <person name="Schmutz J."/>
            <person name="Larimer F."/>
            <person name="Land M."/>
            <person name="Hauser L."/>
            <person name="Kyrpides N."/>
            <person name="Mikhailova N."/>
            <person name="Cozen A.E."/>
            <person name="Fitz-Gibbon S.T."/>
            <person name="House C.H."/>
            <person name="Saltikov C."/>
            <person name="Lowe T."/>
            <person name="Richardson P."/>
        </authorList>
    </citation>
    <scope>NUCLEOTIDE SEQUENCE [LARGE SCALE GENOMIC DNA]</scope>
    <source>
        <strain>DSM 4184 / JCM 9189 / GEO3</strain>
    </source>
</reference>
<feature type="chain" id="PRO_0000326618" description="Transcription factor E">
    <location>
        <begin position="1"/>
        <end position="170"/>
    </location>
</feature>
<feature type="domain" description="HTH TFE/IIEalpha-type" evidence="1">
    <location>
        <begin position="1"/>
        <end position="93"/>
    </location>
</feature>
<proteinExistence type="inferred from homology"/>
<comment type="function">
    <text evidence="1">Transcription factor that plays a role in the activation of archaeal genes transcribed by RNA polymerase. Facilitates transcription initiation by enhancing TATA-box recognition by TATA-box-binding protein (Tbp), and transcription factor B (Tfb) and RNA polymerase recruitment. Not absolutely required for transcription in vitro, but particularly important in cases where Tbp or Tfb function is not optimal. It dynamically alters the nucleic acid-binding properties of RNA polymerases by stabilizing the initiation complex and destabilizing elongation complexes. Seems to translocate with the RNA polymerase following initiation and acts by binding to the non template strand of the transcription bubble in elongation complexes.</text>
</comment>
<comment type="subunit">
    <text evidence="1">Monomer. Interaction with RNA polymerase subunits RpoF and RpoE is necessary for Tfe stimulatory transcription activity. Able to interact with Tbp and RNA polymerase in the absence of DNA promoter. Interacts both with the preinitiation and elongation complexes.</text>
</comment>
<comment type="domain">
    <text evidence="1">The winged helix domain is involved in binding to DNA in the preinitiation complex.</text>
</comment>
<comment type="similarity">
    <text evidence="1">Belongs to the TFE family.</text>
</comment>
<evidence type="ECO:0000255" key="1">
    <source>
        <dbReference type="HAMAP-Rule" id="MF_01909"/>
    </source>
</evidence>
<gene>
    <name evidence="1" type="primary">tfe</name>
    <name type="ordered locus">Pisl_1074</name>
</gene>
<keyword id="KW-0238">DNA-binding</keyword>
<keyword id="KW-0804">Transcription</keyword>
<keyword id="KW-0805">Transcription regulation</keyword>
<sequence length="170" mass="20037">MKEAYLYIVEKSVAWEFDSPEYGRLARKVVELLYERKEDLSDDRVAIFLNISTAETRRILQYLMKQNMVGVKKRTTEDYRIEYTWYVDDEIIRQAIKNRAKVAKEKISSLIRSLTEGAYYICPTCHMRYTLDEAINYGGVCPVCGTQLEYVENTEEINKLTKVYEEVDKI</sequence>
<accession>A1RTG5</accession>
<name>TFE_PYRIL</name>
<organism>
    <name type="scientific">Pyrobaculum islandicum (strain DSM 4184 / JCM 9189 / GEO3)</name>
    <dbReference type="NCBI Taxonomy" id="384616"/>
    <lineage>
        <taxon>Archaea</taxon>
        <taxon>Thermoproteota</taxon>
        <taxon>Thermoprotei</taxon>
        <taxon>Thermoproteales</taxon>
        <taxon>Thermoproteaceae</taxon>
        <taxon>Pyrobaculum</taxon>
    </lineage>
</organism>
<protein>
    <recommendedName>
        <fullName evidence="1">Transcription factor E</fullName>
        <shortName evidence="1">TFE</shortName>
    </recommendedName>
    <alternativeName>
        <fullName evidence="1">TFIIE subunit alpha homolog</fullName>
    </alternativeName>
    <alternativeName>
        <fullName evidence="1">Transcription initiation factor TFIIE</fullName>
    </alternativeName>
</protein>